<name>MTLD_LACP3</name>
<evidence type="ECO:0000255" key="1">
    <source>
        <dbReference type="HAMAP-Rule" id="MF_00196"/>
    </source>
</evidence>
<gene>
    <name evidence="1" type="primary">mtlD</name>
    <name type="ordered locus">LSEI_2885</name>
</gene>
<organism>
    <name type="scientific">Lacticaseibacillus paracasei (strain ATCC 334 / BCRC 17002 / CCUG 31169 / CIP 107868 / KCTC 3260 / NRRL B-441)</name>
    <name type="common">Lactobacillus paracasei</name>
    <dbReference type="NCBI Taxonomy" id="321967"/>
    <lineage>
        <taxon>Bacteria</taxon>
        <taxon>Bacillati</taxon>
        <taxon>Bacillota</taxon>
        <taxon>Bacilli</taxon>
        <taxon>Lactobacillales</taxon>
        <taxon>Lactobacillaceae</taxon>
        <taxon>Lacticaseibacillus</taxon>
    </lineage>
</organism>
<accession>Q033M9</accession>
<keyword id="KW-0520">NAD</keyword>
<keyword id="KW-0560">Oxidoreductase</keyword>
<keyword id="KW-1185">Reference proteome</keyword>
<comment type="catalytic activity">
    <reaction evidence="1">
        <text>D-mannitol 1-phosphate + NAD(+) = beta-D-fructose 6-phosphate + NADH + H(+)</text>
        <dbReference type="Rhea" id="RHEA:19661"/>
        <dbReference type="ChEBI" id="CHEBI:15378"/>
        <dbReference type="ChEBI" id="CHEBI:57540"/>
        <dbReference type="ChEBI" id="CHEBI:57634"/>
        <dbReference type="ChEBI" id="CHEBI:57945"/>
        <dbReference type="ChEBI" id="CHEBI:61381"/>
        <dbReference type="EC" id="1.1.1.17"/>
    </reaction>
</comment>
<comment type="similarity">
    <text evidence="1">Belongs to the mannitol dehydrogenase family.</text>
</comment>
<sequence>MMEAVHFGAGNIGRGFIGETLAANGFKINFVDVNETIINALNQRGEYTITLAAPGEKKIHVDNVDGLNNAKDPEAVVKAIAQADLVTTAIGPKILPIIAPLIAQGLQARDAANNHQALDVIACENMIGGSQSLKKSVYEHLDDAGKTFADTYVGFPNAAVDRIVPQQKHDDPLAVSVEDFKEWVVDESQMKNKDLKLKTVDYVPDLEPYIERKLFSVNTGHATTAYTGKYLGYTTIGDAIKDPKVFNQAKGALAETRSLLLSEFKNFDEKDLENYQNRVLQRFQNPYISDDISRVARTPIRKLGYDERFIRPIRELKERGLNYSVLMDTVGMMFHYVEPNDAEAVKLQAMLKDQPLVDVIKEVTGLKDAGLIDEVEASVKSKDR</sequence>
<protein>
    <recommendedName>
        <fullName evidence="1">Mannitol-1-phosphate 5-dehydrogenase</fullName>
        <ecNumber evidence="1">1.1.1.17</ecNumber>
    </recommendedName>
</protein>
<dbReference type="EC" id="1.1.1.17" evidence="1"/>
<dbReference type="EMBL" id="CP000423">
    <property type="protein sequence ID" value="ABJ71593.1"/>
    <property type="molecule type" value="Genomic_DNA"/>
</dbReference>
<dbReference type="RefSeq" id="WP_003568386.1">
    <property type="nucleotide sequence ID" value="NC_008526.1"/>
</dbReference>
<dbReference type="RefSeq" id="YP_808035.1">
    <property type="nucleotide sequence ID" value="NC_008526.1"/>
</dbReference>
<dbReference type="SMR" id="Q033M9"/>
<dbReference type="STRING" id="321967.LSEI_2885"/>
<dbReference type="PaxDb" id="321967-LSEI_2885"/>
<dbReference type="KEGG" id="lca:LSEI_2885"/>
<dbReference type="PATRIC" id="fig|321967.11.peg.2827"/>
<dbReference type="HOGENOM" id="CLU_036089_2_0_9"/>
<dbReference type="Proteomes" id="UP000001651">
    <property type="component" value="Chromosome"/>
</dbReference>
<dbReference type="GO" id="GO:0005829">
    <property type="term" value="C:cytosol"/>
    <property type="evidence" value="ECO:0007669"/>
    <property type="project" value="TreeGrafter"/>
</dbReference>
<dbReference type="GO" id="GO:0008926">
    <property type="term" value="F:mannitol-1-phosphate 5-dehydrogenase activity"/>
    <property type="evidence" value="ECO:0007669"/>
    <property type="project" value="UniProtKB-UniRule"/>
</dbReference>
<dbReference type="GO" id="GO:0019592">
    <property type="term" value="P:mannitol catabolic process"/>
    <property type="evidence" value="ECO:0007669"/>
    <property type="project" value="TreeGrafter"/>
</dbReference>
<dbReference type="Gene3D" id="1.10.1040.10">
    <property type="entry name" value="N-(1-d-carboxylethyl)-l-norvaline Dehydrogenase, domain 2"/>
    <property type="match status" value="1"/>
</dbReference>
<dbReference type="Gene3D" id="3.40.50.720">
    <property type="entry name" value="NAD(P)-binding Rossmann-like Domain"/>
    <property type="match status" value="1"/>
</dbReference>
<dbReference type="HAMAP" id="MF_00196">
    <property type="entry name" value="Mannitol_dehydrog"/>
    <property type="match status" value="1"/>
</dbReference>
<dbReference type="InterPro" id="IPR008927">
    <property type="entry name" value="6-PGluconate_DH-like_C_sf"/>
</dbReference>
<dbReference type="InterPro" id="IPR013328">
    <property type="entry name" value="6PGD_dom2"/>
</dbReference>
<dbReference type="InterPro" id="IPR023028">
    <property type="entry name" value="Mannitol_1_phos_5_DH"/>
</dbReference>
<dbReference type="InterPro" id="IPR000669">
    <property type="entry name" value="Mannitol_DH"/>
</dbReference>
<dbReference type="InterPro" id="IPR013118">
    <property type="entry name" value="Mannitol_DH_C"/>
</dbReference>
<dbReference type="InterPro" id="IPR023027">
    <property type="entry name" value="Mannitol_DH_CS"/>
</dbReference>
<dbReference type="InterPro" id="IPR013131">
    <property type="entry name" value="Mannitol_DH_N"/>
</dbReference>
<dbReference type="InterPro" id="IPR036291">
    <property type="entry name" value="NAD(P)-bd_dom_sf"/>
</dbReference>
<dbReference type="NCBIfam" id="NF002646">
    <property type="entry name" value="PRK02318.1-2"/>
    <property type="match status" value="1"/>
</dbReference>
<dbReference type="NCBIfam" id="NF002647">
    <property type="entry name" value="PRK02318.1-3"/>
    <property type="match status" value="1"/>
</dbReference>
<dbReference type="NCBIfam" id="NF002652">
    <property type="entry name" value="PRK02318.2-5"/>
    <property type="match status" value="1"/>
</dbReference>
<dbReference type="PANTHER" id="PTHR30524:SF0">
    <property type="entry name" value="ALTRONATE OXIDOREDUCTASE-RELATED"/>
    <property type="match status" value="1"/>
</dbReference>
<dbReference type="PANTHER" id="PTHR30524">
    <property type="entry name" value="MANNITOL-1-PHOSPHATE 5-DEHYDROGENASE"/>
    <property type="match status" value="1"/>
</dbReference>
<dbReference type="Pfam" id="PF01232">
    <property type="entry name" value="Mannitol_dh"/>
    <property type="match status" value="1"/>
</dbReference>
<dbReference type="Pfam" id="PF08125">
    <property type="entry name" value="Mannitol_dh_C"/>
    <property type="match status" value="1"/>
</dbReference>
<dbReference type="PRINTS" id="PR00084">
    <property type="entry name" value="MTLDHDRGNASE"/>
</dbReference>
<dbReference type="SUPFAM" id="SSF48179">
    <property type="entry name" value="6-phosphogluconate dehydrogenase C-terminal domain-like"/>
    <property type="match status" value="1"/>
</dbReference>
<dbReference type="SUPFAM" id="SSF51735">
    <property type="entry name" value="NAD(P)-binding Rossmann-fold domains"/>
    <property type="match status" value="1"/>
</dbReference>
<dbReference type="PROSITE" id="PS00974">
    <property type="entry name" value="MANNITOL_DHGENASE"/>
    <property type="match status" value="1"/>
</dbReference>
<reference key="1">
    <citation type="journal article" date="2006" name="Proc. Natl. Acad. Sci. U.S.A.">
        <title>Comparative genomics of the lactic acid bacteria.</title>
        <authorList>
            <person name="Makarova K.S."/>
            <person name="Slesarev A."/>
            <person name="Wolf Y.I."/>
            <person name="Sorokin A."/>
            <person name="Mirkin B."/>
            <person name="Koonin E.V."/>
            <person name="Pavlov A."/>
            <person name="Pavlova N."/>
            <person name="Karamychev V."/>
            <person name="Polouchine N."/>
            <person name="Shakhova V."/>
            <person name="Grigoriev I."/>
            <person name="Lou Y."/>
            <person name="Rohksar D."/>
            <person name="Lucas S."/>
            <person name="Huang K."/>
            <person name="Goodstein D.M."/>
            <person name="Hawkins T."/>
            <person name="Plengvidhya V."/>
            <person name="Welker D."/>
            <person name="Hughes J."/>
            <person name="Goh Y."/>
            <person name="Benson A."/>
            <person name="Baldwin K."/>
            <person name="Lee J.-H."/>
            <person name="Diaz-Muniz I."/>
            <person name="Dosti B."/>
            <person name="Smeianov V."/>
            <person name="Wechter W."/>
            <person name="Barabote R."/>
            <person name="Lorca G."/>
            <person name="Altermann E."/>
            <person name="Barrangou R."/>
            <person name="Ganesan B."/>
            <person name="Xie Y."/>
            <person name="Rawsthorne H."/>
            <person name="Tamir D."/>
            <person name="Parker C."/>
            <person name="Breidt F."/>
            <person name="Broadbent J.R."/>
            <person name="Hutkins R."/>
            <person name="O'Sullivan D."/>
            <person name="Steele J."/>
            <person name="Unlu G."/>
            <person name="Saier M.H. Jr."/>
            <person name="Klaenhammer T."/>
            <person name="Richardson P."/>
            <person name="Kozyavkin S."/>
            <person name="Weimer B.C."/>
            <person name="Mills D.A."/>
        </authorList>
    </citation>
    <scope>NUCLEOTIDE SEQUENCE [LARGE SCALE GENOMIC DNA]</scope>
    <source>
        <strain>ATCC 334 / BCRC 17002 / CCUG 31169 / CIP 107868 / KCTC 3260 / NRRL B-441</strain>
    </source>
</reference>
<feature type="chain" id="PRO_1000011802" description="Mannitol-1-phosphate 5-dehydrogenase">
    <location>
        <begin position="1"/>
        <end position="384"/>
    </location>
</feature>
<feature type="binding site" evidence="1">
    <location>
        <begin position="4"/>
        <end position="15"/>
    </location>
    <ligand>
        <name>NAD(+)</name>
        <dbReference type="ChEBI" id="CHEBI:57540"/>
    </ligand>
</feature>
<proteinExistence type="inferred from homology"/>